<organism>
    <name type="scientific">Thermus thermophilus (strain ATCC BAA-163 / DSM 7039 / HB27)</name>
    <dbReference type="NCBI Taxonomy" id="262724"/>
    <lineage>
        <taxon>Bacteria</taxon>
        <taxon>Thermotogati</taxon>
        <taxon>Deinococcota</taxon>
        <taxon>Deinococci</taxon>
        <taxon>Thermales</taxon>
        <taxon>Thermaceae</taxon>
        <taxon>Thermus</taxon>
    </lineage>
</organism>
<feature type="chain" id="PRO_0000141902" description="3-isopropylmalate dehydratase small subunit">
    <location>
        <begin position="1"/>
        <end position="201"/>
    </location>
</feature>
<sequence length="201" mass="22550">MLEKFTVIRGKAVPLRGEDIDTDRILPARFMKVLTFEGLGQYLFYDERFDEKGNPKPHPLNDPRYRGATILLVESGFGSGSSREHAPQAIKRAGFKAIIGESFAEIFFGNATAIGLPCVSLSPEDLGVLFRSVEENPELEVEIDLVNQEVRFGDRTAPLSIREEAREALVEGLWDPIGELLEAGELLDQFDQKLPYPRRTE</sequence>
<protein>
    <recommendedName>
        <fullName evidence="1">3-isopropylmalate dehydratase small subunit</fullName>
        <ecNumber evidence="1">4.2.1.33</ecNumber>
    </recommendedName>
    <alternativeName>
        <fullName evidence="1">Alpha-IPM isomerase</fullName>
        <shortName evidence="1">IPMI</shortName>
    </alternativeName>
    <alternativeName>
        <fullName evidence="1">Isopropylmalate isomerase</fullName>
    </alternativeName>
</protein>
<comment type="function">
    <text evidence="1">Catalyzes the isomerization between 2-isopropylmalate and 3-isopropylmalate, via the formation of 2-isopropylmaleate.</text>
</comment>
<comment type="catalytic activity">
    <reaction evidence="1">
        <text>(2R,3S)-3-isopropylmalate = (2S)-2-isopropylmalate</text>
        <dbReference type="Rhea" id="RHEA:32287"/>
        <dbReference type="ChEBI" id="CHEBI:1178"/>
        <dbReference type="ChEBI" id="CHEBI:35121"/>
        <dbReference type="EC" id="4.2.1.33"/>
    </reaction>
</comment>
<comment type="pathway">
    <text evidence="1">Amino-acid biosynthesis; L-leucine biosynthesis; L-leucine from 3-methyl-2-oxobutanoate: step 2/4.</text>
</comment>
<comment type="subunit">
    <text evidence="1">Heterodimer of LeuC and LeuD.</text>
</comment>
<comment type="similarity">
    <text evidence="1">Belongs to the LeuD family. LeuD type 1 subfamily.</text>
</comment>
<dbReference type="EC" id="4.2.1.33" evidence="1"/>
<dbReference type="EMBL" id="AE017221">
    <property type="protein sequence ID" value="AAS81210.1"/>
    <property type="molecule type" value="Genomic_DNA"/>
</dbReference>
<dbReference type="RefSeq" id="WP_011173295.1">
    <property type="nucleotide sequence ID" value="NC_005835.1"/>
</dbReference>
<dbReference type="SMR" id="Q72JB2"/>
<dbReference type="KEGG" id="tth:TT_C0866"/>
<dbReference type="eggNOG" id="COG0066">
    <property type="taxonomic scope" value="Bacteria"/>
</dbReference>
<dbReference type="HOGENOM" id="CLU_081378_0_0_0"/>
<dbReference type="OrthoDB" id="9777465at2"/>
<dbReference type="UniPathway" id="UPA00048">
    <property type="reaction ID" value="UER00071"/>
</dbReference>
<dbReference type="Proteomes" id="UP000000592">
    <property type="component" value="Chromosome"/>
</dbReference>
<dbReference type="GO" id="GO:0009316">
    <property type="term" value="C:3-isopropylmalate dehydratase complex"/>
    <property type="evidence" value="ECO:0007669"/>
    <property type="project" value="InterPro"/>
</dbReference>
<dbReference type="GO" id="GO:0003861">
    <property type="term" value="F:3-isopropylmalate dehydratase activity"/>
    <property type="evidence" value="ECO:0007669"/>
    <property type="project" value="UniProtKB-UniRule"/>
</dbReference>
<dbReference type="GO" id="GO:0009098">
    <property type="term" value="P:L-leucine biosynthetic process"/>
    <property type="evidence" value="ECO:0007669"/>
    <property type="project" value="UniProtKB-UniRule"/>
</dbReference>
<dbReference type="CDD" id="cd01577">
    <property type="entry name" value="IPMI_Swivel"/>
    <property type="match status" value="1"/>
</dbReference>
<dbReference type="Gene3D" id="3.20.19.10">
    <property type="entry name" value="Aconitase, domain 4"/>
    <property type="match status" value="1"/>
</dbReference>
<dbReference type="HAMAP" id="MF_01031">
    <property type="entry name" value="LeuD_type1"/>
    <property type="match status" value="1"/>
</dbReference>
<dbReference type="InterPro" id="IPR004431">
    <property type="entry name" value="3-IsopropMal_deHydase_ssu"/>
</dbReference>
<dbReference type="InterPro" id="IPR015928">
    <property type="entry name" value="Aconitase/3IPM_dehydase_swvl"/>
</dbReference>
<dbReference type="InterPro" id="IPR000573">
    <property type="entry name" value="AconitaseA/IPMdHydase_ssu_swvl"/>
</dbReference>
<dbReference type="InterPro" id="IPR033940">
    <property type="entry name" value="IPMI_Swivel"/>
</dbReference>
<dbReference type="InterPro" id="IPR050075">
    <property type="entry name" value="LeuD"/>
</dbReference>
<dbReference type="NCBIfam" id="TIGR00171">
    <property type="entry name" value="leuD"/>
    <property type="match status" value="1"/>
</dbReference>
<dbReference type="NCBIfam" id="NF002458">
    <property type="entry name" value="PRK01641.1"/>
    <property type="match status" value="1"/>
</dbReference>
<dbReference type="PANTHER" id="PTHR43345:SF5">
    <property type="entry name" value="3-ISOPROPYLMALATE DEHYDRATASE SMALL SUBUNIT"/>
    <property type="match status" value="1"/>
</dbReference>
<dbReference type="PANTHER" id="PTHR43345">
    <property type="entry name" value="3-ISOPROPYLMALATE DEHYDRATASE SMALL SUBUNIT 2-RELATED-RELATED"/>
    <property type="match status" value="1"/>
</dbReference>
<dbReference type="Pfam" id="PF00694">
    <property type="entry name" value="Aconitase_C"/>
    <property type="match status" value="1"/>
</dbReference>
<dbReference type="SUPFAM" id="SSF52016">
    <property type="entry name" value="LeuD/IlvD-like"/>
    <property type="match status" value="1"/>
</dbReference>
<reference key="1">
    <citation type="journal article" date="2004" name="Nat. Biotechnol.">
        <title>The genome sequence of the extreme thermophile Thermus thermophilus.</title>
        <authorList>
            <person name="Henne A."/>
            <person name="Brueggemann H."/>
            <person name="Raasch C."/>
            <person name="Wiezer A."/>
            <person name="Hartsch T."/>
            <person name="Liesegang H."/>
            <person name="Johann A."/>
            <person name="Lienard T."/>
            <person name="Gohl O."/>
            <person name="Martinez-Arias R."/>
            <person name="Jacobi C."/>
            <person name="Starkuviene V."/>
            <person name="Schlenczeck S."/>
            <person name="Dencker S."/>
            <person name="Huber R."/>
            <person name="Klenk H.-P."/>
            <person name="Kramer W."/>
            <person name="Merkl R."/>
            <person name="Gottschalk G."/>
            <person name="Fritz H.-J."/>
        </authorList>
    </citation>
    <scope>NUCLEOTIDE SEQUENCE [LARGE SCALE GENOMIC DNA]</scope>
    <source>
        <strain>ATCC BAA-163 / DSM 7039 / HB27</strain>
    </source>
</reference>
<evidence type="ECO:0000255" key="1">
    <source>
        <dbReference type="HAMAP-Rule" id="MF_01031"/>
    </source>
</evidence>
<proteinExistence type="inferred from homology"/>
<accession>Q72JB2</accession>
<name>LEUD_THET2</name>
<gene>
    <name evidence="1" type="primary">leuD</name>
    <name type="ordered locus">TT_C0866</name>
</gene>
<keyword id="KW-0028">Amino-acid biosynthesis</keyword>
<keyword id="KW-0100">Branched-chain amino acid biosynthesis</keyword>
<keyword id="KW-0432">Leucine biosynthesis</keyword>
<keyword id="KW-0456">Lyase</keyword>